<organism>
    <name type="scientific">Pseudomonas aeruginosa (strain UCBPP-PA14)</name>
    <dbReference type="NCBI Taxonomy" id="208963"/>
    <lineage>
        <taxon>Bacteria</taxon>
        <taxon>Pseudomonadati</taxon>
        <taxon>Pseudomonadota</taxon>
        <taxon>Gammaproteobacteria</taxon>
        <taxon>Pseudomonadales</taxon>
        <taxon>Pseudomonadaceae</taxon>
        <taxon>Pseudomonas</taxon>
    </lineage>
</organism>
<proteinExistence type="inferred from homology"/>
<sequence length="426" mass="46992">MTDTRNGEDNGKLLYCSFCGKSQHEVRKLIAGPSVFICDECVDLCNDIIREEVQEAQAESSGHKLPAPKEIRTILDQYVIGQERAKKVLAVAVYNHYKRLNQRDKKDDIELGKSNILMIGPTGSGKTLLAETLARLLNVPFTIADATTLTEAGYVGEDVENIIQKLLQKCDYDVEKAQMGIVYIDEIDKISRKSDNPSITRDVSGEGVQQALLKLIEGTVASVPPQGGRKHPQQEFLQVDTRNILFICGGAFAGLERVIQNRSARGGIGFNAEVRSQEMGKKVGEAFKEVEPEDLVKFGLIPEFVGRLPVIATLDELDEAALMQILTEPKNALTKQYAKLFEMEGVDLEFRPDALKAVARKALERKTGARGLRSILEGILLDTMYEIPSQQDVSKVVIDESVIDGSSQPLMIYENSEKPAKAAPEA</sequence>
<protein>
    <recommendedName>
        <fullName evidence="1">ATP-dependent Clp protease ATP-binding subunit ClpX</fullName>
    </recommendedName>
</protein>
<feature type="chain" id="PRO_1000024622" description="ATP-dependent Clp protease ATP-binding subunit ClpX">
    <location>
        <begin position="1"/>
        <end position="426"/>
    </location>
</feature>
<feature type="domain" description="ClpX-type ZB" evidence="2">
    <location>
        <begin position="4"/>
        <end position="57"/>
    </location>
</feature>
<feature type="binding site" evidence="2">
    <location>
        <position position="16"/>
    </location>
    <ligand>
        <name>Zn(2+)</name>
        <dbReference type="ChEBI" id="CHEBI:29105"/>
    </ligand>
</feature>
<feature type="binding site" evidence="2">
    <location>
        <position position="19"/>
    </location>
    <ligand>
        <name>Zn(2+)</name>
        <dbReference type="ChEBI" id="CHEBI:29105"/>
    </ligand>
</feature>
<feature type="binding site" evidence="2">
    <location>
        <position position="38"/>
    </location>
    <ligand>
        <name>Zn(2+)</name>
        <dbReference type="ChEBI" id="CHEBI:29105"/>
    </ligand>
</feature>
<feature type="binding site" evidence="2">
    <location>
        <position position="41"/>
    </location>
    <ligand>
        <name>Zn(2+)</name>
        <dbReference type="ChEBI" id="CHEBI:29105"/>
    </ligand>
</feature>
<feature type="binding site" evidence="1">
    <location>
        <begin position="121"/>
        <end position="128"/>
    </location>
    <ligand>
        <name>ATP</name>
        <dbReference type="ChEBI" id="CHEBI:30616"/>
    </ligand>
</feature>
<evidence type="ECO:0000255" key="1">
    <source>
        <dbReference type="HAMAP-Rule" id="MF_00175"/>
    </source>
</evidence>
<evidence type="ECO:0000255" key="2">
    <source>
        <dbReference type="PROSITE-ProRule" id="PRU01250"/>
    </source>
</evidence>
<name>CLPX_PSEAB</name>
<comment type="function">
    <text evidence="1">ATP-dependent specificity component of the Clp protease. It directs the protease to specific substrates. Can perform chaperone functions in the absence of ClpP.</text>
</comment>
<comment type="subunit">
    <text evidence="1">Component of the ClpX-ClpP complex. Forms a hexameric ring that, in the presence of ATP, binds to fourteen ClpP subunits assembled into a disk-like structure with a central cavity, resembling the structure of eukaryotic proteasomes.</text>
</comment>
<comment type="similarity">
    <text evidence="1">Belongs to the ClpX chaperone family.</text>
</comment>
<reference key="1">
    <citation type="journal article" date="2006" name="Genome Biol.">
        <title>Genomic analysis reveals that Pseudomonas aeruginosa virulence is combinatorial.</title>
        <authorList>
            <person name="Lee D.G."/>
            <person name="Urbach J.M."/>
            <person name="Wu G."/>
            <person name="Liberati N.T."/>
            <person name="Feinbaum R.L."/>
            <person name="Miyata S."/>
            <person name="Diggins L.T."/>
            <person name="He J."/>
            <person name="Saucier M."/>
            <person name="Deziel E."/>
            <person name="Friedman L."/>
            <person name="Li L."/>
            <person name="Grills G."/>
            <person name="Montgomery K."/>
            <person name="Kucherlapati R."/>
            <person name="Rahme L.G."/>
            <person name="Ausubel F.M."/>
        </authorList>
    </citation>
    <scope>NUCLEOTIDE SEQUENCE [LARGE SCALE GENOMIC DNA]</scope>
    <source>
        <strain>UCBPP-PA14</strain>
    </source>
</reference>
<gene>
    <name evidence="1" type="primary">clpX</name>
    <name type="ordered locus">PA14_41230</name>
</gene>
<dbReference type="EMBL" id="CP000438">
    <property type="protein sequence ID" value="ABJ10988.1"/>
    <property type="molecule type" value="Genomic_DNA"/>
</dbReference>
<dbReference type="RefSeq" id="WP_003087924.1">
    <property type="nucleotide sequence ID" value="NZ_CP034244.1"/>
</dbReference>
<dbReference type="SMR" id="Q02KU5"/>
<dbReference type="GeneID" id="77221608"/>
<dbReference type="KEGG" id="pau:PA14_41230"/>
<dbReference type="PseudoCAP" id="PA14_41230"/>
<dbReference type="HOGENOM" id="CLU_014218_8_2_6"/>
<dbReference type="BioCyc" id="PAER208963:G1G74-3452-MONOMER"/>
<dbReference type="Proteomes" id="UP000000653">
    <property type="component" value="Chromosome"/>
</dbReference>
<dbReference type="GO" id="GO:0009376">
    <property type="term" value="C:HslUV protease complex"/>
    <property type="evidence" value="ECO:0007669"/>
    <property type="project" value="TreeGrafter"/>
</dbReference>
<dbReference type="GO" id="GO:0005524">
    <property type="term" value="F:ATP binding"/>
    <property type="evidence" value="ECO:0007669"/>
    <property type="project" value="UniProtKB-UniRule"/>
</dbReference>
<dbReference type="GO" id="GO:0016887">
    <property type="term" value="F:ATP hydrolysis activity"/>
    <property type="evidence" value="ECO:0007669"/>
    <property type="project" value="InterPro"/>
</dbReference>
<dbReference type="GO" id="GO:0140662">
    <property type="term" value="F:ATP-dependent protein folding chaperone"/>
    <property type="evidence" value="ECO:0007669"/>
    <property type="project" value="InterPro"/>
</dbReference>
<dbReference type="GO" id="GO:0046983">
    <property type="term" value="F:protein dimerization activity"/>
    <property type="evidence" value="ECO:0007669"/>
    <property type="project" value="InterPro"/>
</dbReference>
<dbReference type="GO" id="GO:0051082">
    <property type="term" value="F:unfolded protein binding"/>
    <property type="evidence" value="ECO:0007669"/>
    <property type="project" value="UniProtKB-UniRule"/>
</dbReference>
<dbReference type="GO" id="GO:0008270">
    <property type="term" value="F:zinc ion binding"/>
    <property type="evidence" value="ECO:0007669"/>
    <property type="project" value="InterPro"/>
</dbReference>
<dbReference type="GO" id="GO:0051301">
    <property type="term" value="P:cell division"/>
    <property type="evidence" value="ECO:0007669"/>
    <property type="project" value="TreeGrafter"/>
</dbReference>
<dbReference type="GO" id="GO:0051603">
    <property type="term" value="P:proteolysis involved in protein catabolic process"/>
    <property type="evidence" value="ECO:0007669"/>
    <property type="project" value="TreeGrafter"/>
</dbReference>
<dbReference type="CDD" id="cd19497">
    <property type="entry name" value="RecA-like_ClpX"/>
    <property type="match status" value="1"/>
</dbReference>
<dbReference type="FunFam" id="1.10.8.60:FF:000002">
    <property type="entry name" value="ATP-dependent Clp protease ATP-binding subunit ClpX"/>
    <property type="match status" value="1"/>
</dbReference>
<dbReference type="FunFam" id="3.40.50.300:FF:000005">
    <property type="entry name" value="ATP-dependent Clp protease ATP-binding subunit ClpX"/>
    <property type="match status" value="1"/>
</dbReference>
<dbReference type="Gene3D" id="1.10.8.60">
    <property type="match status" value="1"/>
</dbReference>
<dbReference type="Gene3D" id="6.20.220.10">
    <property type="entry name" value="ClpX chaperone, C4-type zinc finger domain"/>
    <property type="match status" value="1"/>
</dbReference>
<dbReference type="Gene3D" id="3.40.50.300">
    <property type="entry name" value="P-loop containing nucleotide triphosphate hydrolases"/>
    <property type="match status" value="1"/>
</dbReference>
<dbReference type="HAMAP" id="MF_00175">
    <property type="entry name" value="ClpX"/>
    <property type="match status" value="1"/>
</dbReference>
<dbReference type="InterPro" id="IPR003593">
    <property type="entry name" value="AAA+_ATPase"/>
</dbReference>
<dbReference type="InterPro" id="IPR050052">
    <property type="entry name" value="ATP-dep_Clp_protease_ClpX"/>
</dbReference>
<dbReference type="InterPro" id="IPR003959">
    <property type="entry name" value="ATPase_AAA_core"/>
</dbReference>
<dbReference type="InterPro" id="IPR019489">
    <property type="entry name" value="Clp_ATPase_C"/>
</dbReference>
<dbReference type="InterPro" id="IPR004487">
    <property type="entry name" value="Clp_protease_ATP-bd_su_ClpX"/>
</dbReference>
<dbReference type="InterPro" id="IPR046425">
    <property type="entry name" value="ClpX_bact"/>
</dbReference>
<dbReference type="InterPro" id="IPR027417">
    <property type="entry name" value="P-loop_NTPase"/>
</dbReference>
<dbReference type="InterPro" id="IPR010603">
    <property type="entry name" value="Znf_CppX_C4"/>
</dbReference>
<dbReference type="InterPro" id="IPR038366">
    <property type="entry name" value="Znf_CppX_C4_sf"/>
</dbReference>
<dbReference type="NCBIfam" id="TIGR00382">
    <property type="entry name" value="clpX"/>
    <property type="match status" value="1"/>
</dbReference>
<dbReference type="NCBIfam" id="NF003745">
    <property type="entry name" value="PRK05342.1"/>
    <property type="match status" value="1"/>
</dbReference>
<dbReference type="PANTHER" id="PTHR48102:SF7">
    <property type="entry name" value="ATP-DEPENDENT CLP PROTEASE ATP-BINDING SUBUNIT CLPX-LIKE, MITOCHONDRIAL"/>
    <property type="match status" value="1"/>
</dbReference>
<dbReference type="PANTHER" id="PTHR48102">
    <property type="entry name" value="ATP-DEPENDENT CLP PROTEASE ATP-BINDING SUBUNIT CLPX-LIKE, MITOCHONDRIAL-RELATED"/>
    <property type="match status" value="1"/>
</dbReference>
<dbReference type="Pfam" id="PF07724">
    <property type="entry name" value="AAA_2"/>
    <property type="match status" value="1"/>
</dbReference>
<dbReference type="Pfam" id="PF10431">
    <property type="entry name" value="ClpB_D2-small"/>
    <property type="match status" value="1"/>
</dbReference>
<dbReference type="Pfam" id="PF06689">
    <property type="entry name" value="zf-C4_ClpX"/>
    <property type="match status" value="1"/>
</dbReference>
<dbReference type="SMART" id="SM00382">
    <property type="entry name" value="AAA"/>
    <property type="match status" value="1"/>
</dbReference>
<dbReference type="SMART" id="SM01086">
    <property type="entry name" value="ClpB_D2-small"/>
    <property type="match status" value="1"/>
</dbReference>
<dbReference type="SMART" id="SM00994">
    <property type="entry name" value="zf-C4_ClpX"/>
    <property type="match status" value="1"/>
</dbReference>
<dbReference type="SUPFAM" id="SSF57716">
    <property type="entry name" value="Glucocorticoid receptor-like (DNA-binding domain)"/>
    <property type="match status" value="1"/>
</dbReference>
<dbReference type="SUPFAM" id="SSF52540">
    <property type="entry name" value="P-loop containing nucleoside triphosphate hydrolases"/>
    <property type="match status" value="1"/>
</dbReference>
<dbReference type="PROSITE" id="PS51902">
    <property type="entry name" value="CLPX_ZB"/>
    <property type="match status" value="1"/>
</dbReference>
<keyword id="KW-0067">ATP-binding</keyword>
<keyword id="KW-0143">Chaperone</keyword>
<keyword id="KW-0479">Metal-binding</keyword>
<keyword id="KW-0547">Nucleotide-binding</keyword>
<keyword id="KW-0862">Zinc</keyword>
<accession>Q02KU5</accession>